<gene>
    <name evidence="1" type="primary">ndhH</name>
    <name type="ordered locus">PS048</name>
</gene>
<evidence type="ECO:0000255" key="1">
    <source>
        <dbReference type="HAMAP-Rule" id="MF_01358"/>
    </source>
</evidence>
<sequence length="393" mass="45658">MSLSLKRKDLMIVNMGPQHPSMHGVLRLIVTLDGEDVIDCEPILGYLHRGMEKIAENRSIIQYLPYVTRWDYLATMFTEAITVNAPEFLENIQIPQRASYIRVIMLELSRIASHLLWLGPFMADLGAQTPFFYIFRERELIYDLFEAATGMRMMHNYFRIGGVAADLPYGWMDKCLDFCDYFLQGVVEYQQLITQNPIFLERVEGVGFISGEEAVNWGLSGPMLRASGIQWDLRKIDPYESYNQFDWKVQWQKEGDSLARYLVRVGEMRESIKIIQQAVEKIPGGPYENLEARRFKKAKNPEWNDFEYRFLGKKPSPNFELSKQELYVRVEAPKGELGIYLVGDDSLFPWRWKIRPPGFINLQILPQLVKKMKLADIMTILGSIDIIMGEVDR</sequence>
<dbReference type="EC" id="7.1.1.-" evidence="1"/>
<dbReference type="EMBL" id="AE009947">
    <property type="protein sequence ID" value="AAT44659.1"/>
    <property type="molecule type" value="Genomic_DNA"/>
</dbReference>
<dbReference type="SMR" id="Q6L3D4"/>
<dbReference type="GO" id="GO:0009535">
    <property type="term" value="C:chloroplast thylakoid membrane"/>
    <property type="evidence" value="ECO:0007669"/>
    <property type="project" value="UniProtKB-SubCell"/>
</dbReference>
<dbReference type="GO" id="GO:0051287">
    <property type="term" value="F:NAD binding"/>
    <property type="evidence" value="ECO:0007669"/>
    <property type="project" value="InterPro"/>
</dbReference>
<dbReference type="GO" id="GO:0016655">
    <property type="term" value="F:oxidoreductase activity, acting on NAD(P)H, quinone or similar compound as acceptor"/>
    <property type="evidence" value="ECO:0007669"/>
    <property type="project" value="UniProtKB-UniRule"/>
</dbReference>
<dbReference type="GO" id="GO:0048038">
    <property type="term" value="F:quinone binding"/>
    <property type="evidence" value="ECO:0007669"/>
    <property type="project" value="UniProtKB-KW"/>
</dbReference>
<dbReference type="GO" id="GO:0019684">
    <property type="term" value="P:photosynthesis, light reaction"/>
    <property type="evidence" value="ECO:0007669"/>
    <property type="project" value="UniProtKB-UniRule"/>
</dbReference>
<dbReference type="Gene3D" id="1.10.645.10">
    <property type="entry name" value="Cytochrome-c3 Hydrogenase, chain B"/>
    <property type="match status" value="1"/>
</dbReference>
<dbReference type="HAMAP" id="MF_01358">
    <property type="entry name" value="NDH1_NuoD"/>
    <property type="match status" value="1"/>
</dbReference>
<dbReference type="InterPro" id="IPR001135">
    <property type="entry name" value="NADH_Q_OxRdtase_suD"/>
</dbReference>
<dbReference type="InterPro" id="IPR014029">
    <property type="entry name" value="NADH_UbQ_OxRdtase_49kDa_CS"/>
</dbReference>
<dbReference type="InterPro" id="IPR022885">
    <property type="entry name" value="NDH1_su_D/H"/>
</dbReference>
<dbReference type="InterPro" id="IPR029014">
    <property type="entry name" value="NiFe-Hase_large"/>
</dbReference>
<dbReference type="NCBIfam" id="NF004739">
    <property type="entry name" value="PRK06075.1"/>
    <property type="match status" value="1"/>
</dbReference>
<dbReference type="NCBIfam" id="NF005649">
    <property type="entry name" value="PRK07415.1"/>
    <property type="match status" value="1"/>
</dbReference>
<dbReference type="PANTHER" id="PTHR11993:SF10">
    <property type="entry name" value="NADH DEHYDROGENASE [UBIQUINONE] IRON-SULFUR PROTEIN 2, MITOCHONDRIAL"/>
    <property type="match status" value="1"/>
</dbReference>
<dbReference type="PANTHER" id="PTHR11993">
    <property type="entry name" value="NADH-UBIQUINONE OXIDOREDUCTASE 49 KDA SUBUNIT"/>
    <property type="match status" value="1"/>
</dbReference>
<dbReference type="Pfam" id="PF00346">
    <property type="entry name" value="Complex1_49kDa"/>
    <property type="match status" value="1"/>
</dbReference>
<dbReference type="SUPFAM" id="SSF56762">
    <property type="entry name" value="HydB/Nqo4-like"/>
    <property type="match status" value="1"/>
</dbReference>
<dbReference type="PROSITE" id="PS00535">
    <property type="entry name" value="COMPLEX1_49K"/>
    <property type="match status" value="1"/>
</dbReference>
<proteinExistence type="inferred from homology"/>
<name>NDHH_SACHY</name>
<organism>
    <name type="scientific">Saccharum hybrid</name>
    <name type="common">Sugarcane</name>
    <dbReference type="NCBI Taxonomy" id="15819"/>
    <lineage>
        <taxon>Eukaryota</taxon>
        <taxon>Viridiplantae</taxon>
        <taxon>Streptophyta</taxon>
        <taxon>Embryophyta</taxon>
        <taxon>Tracheophyta</taxon>
        <taxon>Spermatophyta</taxon>
        <taxon>Magnoliopsida</taxon>
        <taxon>Liliopsida</taxon>
        <taxon>Poales</taxon>
        <taxon>Poaceae</taxon>
        <taxon>PACMAD clade</taxon>
        <taxon>Panicoideae</taxon>
        <taxon>Andropogonodae</taxon>
        <taxon>Andropogoneae</taxon>
        <taxon>Saccharinae</taxon>
        <taxon>Saccharum</taxon>
    </lineage>
</organism>
<geneLocation type="chloroplast"/>
<keyword id="KW-0150">Chloroplast</keyword>
<keyword id="KW-0472">Membrane</keyword>
<keyword id="KW-0520">NAD</keyword>
<keyword id="KW-0521">NADP</keyword>
<keyword id="KW-0934">Plastid</keyword>
<keyword id="KW-0618">Plastoquinone</keyword>
<keyword id="KW-0874">Quinone</keyword>
<keyword id="KW-0793">Thylakoid</keyword>
<keyword id="KW-1278">Translocase</keyword>
<keyword id="KW-0813">Transport</keyword>
<reference key="1">
    <citation type="journal article" date="2004" name="Curr. Genet.">
        <title>Structural features and transcript-editing analysis of sugarcane (Saccharum officinarum L.) chloroplast genome.</title>
        <authorList>
            <person name="Calsa T. Jr."/>
            <person name="Carraro D.M."/>
            <person name="Benatti M.R."/>
            <person name="Barbosa A.C."/>
            <person name="Kitajima J.P."/>
            <person name="Carrer H."/>
        </authorList>
    </citation>
    <scope>NUCLEOTIDE SEQUENCE [LARGE SCALE GENOMIC DNA]</scope>
    <source>
        <strain>cv. SP-80-3280</strain>
    </source>
</reference>
<protein>
    <recommendedName>
        <fullName evidence="1">NAD(P)H-quinone oxidoreductase subunit H, chloroplastic</fullName>
        <ecNumber evidence="1">7.1.1.-</ecNumber>
    </recommendedName>
    <alternativeName>
        <fullName>NAD(P)H dehydrogenase subunit H</fullName>
    </alternativeName>
    <alternativeName>
        <fullName evidence="1">NADH-plastoquinone oxidoreductase 49 kDa subunit</fullName>
    </alternativeName>
    <alternativeName>
        <fullName evidence="1">NADH-plastoquinone oxidoreductase subunit H</fullName>
    </alternativeName>
</protein>
<feature type="chain" id="PRO_0000226912" description="NAD(P)H-quinone oxidoreductase subunit H, chloroplastic">
    <location>
        <begin position="1"/>
        <end position="393"/>
    </location>
</feature>
<comment type="function">
    <text evidence="1">NDH shuttles electrons from NAD(P)H:plastoquinone, via FMN and iron-sulfur (Fe-S) centers, to quinones in the photosynthetic chain and possibly in a chloroplast respiratory chain. The immediate electron acceptor for the enzyme in this species is believed to be plastoquinone. Couples the redox reaction to proton translocation, and thus conserves the redox energy in a proton gradient.</text>
</comment>
<comment type="catalytic activity">
    <reaction evidence="1">
        <text>a plastoquinone + NADH + (n+1) H(+)(in) = a plastoquinol + NAD(+) + n H(+)(out)</text>
        <dbReference type="Rhea" id="RHEA:42608"/>
        <dbReference type="Rhea" id="RHEA-COMP:9561"/>
        <dbReference type="Rhea" id="RHEA-COMP:9562"/>
        <dbReference type="ChEBI" id="CHEBI:15378"/>
        <dbReference type="ChEBI" id="CHEBI:17757"/>
        <dbReference type="ChEBI" id="CHEBI:57540"/>
        <dbReference type="ChEBI" id="CHEBI:57945"/>
        <dbReference type="ChEBI" id="CHEBI:62192"/>
    </reaction>
</comment>
<comment type="catalytic activity">
    <reaction evidence="1">
        <text>a plastoquinone + NADPH + (n+1) H(+)(in) = a plastoquinol + NADP(+) + n H(+)(out)</text>
        <dbReference type="Rhea" id="RHEA:42612"/>
        <dbReference type="Rhea" id="RHEA-COMP:9561"/>
        <dbReference type="Rhea" id="RHEA-COMP:9562"/>
        <dbReference type="ChEBI" id="CHEBI:15378"/>
        <dbReference type="ChEBI" id="CHEBI:17757"/>
        <dbReference type="ChEBI" id="CHEBI:57783"/>
        <dbReference type="ChEBI" id="CHEBI:58349"/>
        <dbReference type="ChEBI" id="CHEBI:62192"/>
    </reaction>
</comment>
<comment type="subunit">
    <text evidence="1">NDH is composed of at least 16 different subunits, 5 of which are encoded in the nucleus.</text>
</comment>
<comment type="subcellular location">
    <subcellularLocation>
        <location evidence="1">Plastid</location>
        <location evidence="1">Chloroplast thylakoid membrane</location>
        <topology evidence="1">Peripheral membrane protein</topology>
        <orientation evidence="1">Stromal side</orientation>
    </subcellularLocation>
</comment>
<comment type="similarity">
    <text evidence="1">Belongs to the complex I 49 kDa subunit family.</text>
</comment>
<accession>Q6L3D4</accession>